<reference key="1">
    <citation type="journal article" date="2008" name="J. Bacteriol.">
        <title>The genome sequence of the tomato-pathogenic actinomycete Clavibacter michiganensis subsp. michiganensis NCPPB382 reveals a large island involved in pathogenicity.</title>
        <authorList>
            <person name="Gartemann K.-H."/>
            <person name="Abt B."/>
            <person name="Bekel T."/>
            <person name="Burger A."/>
            <person name="Engemann J."/>
            <person name="Fluegel M."/>
            <person name="Gaigalat L."/>
            <person name="Goesmann A."/>
            <person name="Graefen I."/>
            <person name="Kalinowski J."/>
            <person name="Kaup O."/>
            <person name="Kirchner O."/>
            <person name="Krause L."/>
            <person name="Linke B."/>
            <person name="McHardy A."/>
            <person name="Meyer F."/>
            <person name="Pohle S."/>
            <person name="Rueckert C."/>
            <person name="Schneiker S."/>
            <person name="Zellermann E.-M."/>
            <person name="Puehler A."/>
            <person name="Eichenlaub R."/>
            <person name="Kaiser O."/>
            <person name="Bartels D."/>
        </authorList>
    </citation>
    <scope>NUCLEOTIDE SEQUENCE [LARGE SCALE GENOMIC DNA]</scope>
    <source>
        <strain>NCPPB 382</strain>
    </source>
</reference>
<evidence type="ECO:0000255" key="1">
    <source>
        <dbReference type="HAMAP-Rule" id="MF_00051"/>
    </source>
</evidence>
<comment type="function">
    <text evidence="1">Catalyzes the reversible interconversion of serine and glycine with tetrahydrofolate (THF) serving as the one-carbon carrier. This reaction serves as the major source of one-carbon groups required for the biosynthesis of purines, thymidylate, methionine, and other important biomolecules. Also exhibits THF-independent aldolase activity toward beta-hydroxyamino acids, producing glycine and aldehydes, via a retro-aldol mechanism.</text>
</comment>
<comment type="catalytic activity">
    <reaction evidence="1">
        <text>(6R)-5,10-methylene-5,6,7,8-tetrahydrofolate + glycine + H2O = (6S)-5,6,7,8-tetrahydrofolate + L-serine</text>
        <dbReference type="Rhea" id="RHEA:15481"/>
        <dbReference type="ChEBI" id="CHEBI:15377"/>
        <dbReference type="ChEBI" id="CHEBI:15636"/>
        <dbReference type="ChEBI" id="CHEBI:33384"/>
        <dbReference type="ChEBI" id="CHEBI:57305"/>
        <dbReference type="ChEBI" id="CHEBI:57453"/>
        <dbReference type="EC" id="2.1.2.1"/>
    </reaction>
</comment>
<comment type="cofactor">
    <cofactor evidence="1">
        <name>pyridoxal 5'-phosphate</name>
        <dbReference type="ChEBI" id="CHEBI:597326"/>
    </cofactor>
</comment>
<comment type="pathway">
    <text evidence="1">One-carbon metabolism; tetrahydrofolate interconversion.</text>
</comment>
<comment type="pathway">
    <text evidence="1">Amino-acid biosynthesis; glycine biosynthesis; glycine from L-serine: step 1/1.</text>
</comment>
<comment type="subunit">
    <text evidence="1">Homodimer.</text>
</comment>
<comment type="subcellular location">
    <subcellularLocation>
        <location evidence="1">Cytoplasm</location>
    </subcellularLocation>
</comment>
<comment type="similarity">
    <text evidence="1">Belongs to the SHMT family.</text>
</comment>
<protein>
    <recommendedName>
        <fullName evidence="1">Serine hydroxymethyltransferase</fullName>
        <shortName evidence="1">SHMT</shortName>
        <shortName evidence="1">Serine methylase</shortName>
        <ecNumber evidence="1">2.1.2.1</ecNumber>
    </recommendedName>
</protein>
<keyword id="KW-0028">Amino-acid biosynthesis</keyword>
<keyword id="KW-0963">Cytoplasm</keyword>
<keyword id="KW-0554">One-carbon metabolism</keyword>
<keyword id="KW-0663">Pyridoxal phosphate</keyword>
<keyword id="KW-0808">Transferase</keyword>
<name>GLYA_CLAM3</name>
<gene>
    <name evidence="1" type="primary">glyA</name>
    <name type="ordered locus">CMM_2522</name>
</gene>
<accession>A5CU18</accession>
<organism>
    <name type="scientific">Clavibacter michiganensis subsp. michiganensis (strain NCPPB 382)</name>
    <dbReference type="NCBI Taxonomy" id="443906"/>
    <lineage>
        <taxon>Bacteria</taxon>
        <taxon>Bacillati</taxon>
        <taxon>Actinomycetota</taxon>
        <taxon>Actinomycetes</taxon>
        <taxon>Micrococcales</taxon>
        <taxon>Microbacteriaceae</taxon>
        <taxon>Clavibacter</taxon>
    </lineage>
</organism>
<dbReference type="EC" id="2.1.2.1" evidence="1"/>
<dbReference type="EMBL" id="AM711867">
    <property type="protein sequence ID" value="CAN02604.1"/>
    <property type="molecule type" value="Genomic_DNA"/>
</dbReference>
<dbReference type="RefSeq" id="WP_012039211.1">
    <property type="nucleotide sequence ID" value="NC_009480.1"/>
</dbReference>
<dbReference type="SMR" id="A5CU18"/>
<dbReference type="KEGG" id="cmi:CMM_2522"/>
<dbReference type="eggNOG" id="COG0112">
    <property type="taxonomic scope" value="Bacteria"/>
</dbReference>
<dbReference type="HOGENOM" id="CLU_022477_2_1_11"/>
<dbReference type="OrthoDB" id="9803846at2"/>
<dbReference type="UniPathway" id="UPA00193"/>
<dbReference type="UniPathway" id="UPA00288">
    <property type="reaction ID" value="UER01023"/>
</dbReference>
<dbReference type="Proteomes" id="UP000001564">
    <property type="component" value="Chromosome"/>
</dbReference>
<dbReference type="GO" id="GO:0005829">
    <property type="term" value="C:cytosol"/>
    <property type="evidence" value="ECO:0007669"/>
    <property type="project" value="TreeGrafter"/>
</dbReference>
<dbReference type="GO" id="GO:0004372">
    <property type="term" value="F:glycine hydroxymethyltransferase activity"/>
    <property type="evidence" value="ECO:0007669"/>
    <property type="project" value="UniProtKB-UniRule"/>
</dbReference>
<dbReference type="GO" id="GO:0030170">
    <property type="term" value="F:pyridoxal phosphate binding"/>
    <property type="evidence" value="ECO:0007669"/>
    <property type="project" value="UniProtKB-UniRule"/>
</dbReference>
<dbReference type="GO" id="GO:0019264">
    <property type="term" value="P:glycine biosynthetic process from serine"/>
    <property type="evidence" value="ECO:0007669"/>
    <property type="project" value="UniProtKB-UniRule"/>
</dbReference>
<dbReference type="GO" id="GO:0035999">
    <property type="term" value="P:tetrahydrofolate interconversion"/>
    <property type="evidence" value="ECO:0007669"/>
    <property type="project" value="UniProtKB-UniRule"/>
</dbReference>
<dbReference type="CDD" id="cd00378">
    <property type="entry name" value="SHMT"/>
    <property type="match status" value="1"/>
</dbReference>
<dbReference type="FunFam" id="3.40.640.10:FF:000001">
    <property type="entry name" value="Serine hydroxymethyltransferase"/>
    <property type="match status" value="1"/>
</dbReference>
<dbReference type="Gene3D" id="3.90.1150.10">
    <property type="entry name" value="Aspartate Aminotransferase, domain 1"/>
    <property type="match status" value="1"/>
</dbReference>
<dbReference type="Gene3D" id="3.40.640.10">
    <property type="entry name" value="Type I PLP-dependent aspartate aminotransferase-like (Major domain)"/>
    <property type="match status" value="1"/>
</dbReference>
<dbReference type="HAMAP" id="MF_00051">
    <property type="entry name" value="SHMT"/>
    <property type="match status" value="1"/>
</dbReference>
<dbReference type="InterPro" id="IPR015424">
    <property type="entry name" value="PyrdxlP-dep_Trfase"/>
</dbReference>
<dbReference type="InterPro" id="IPR015421">
    <property type="entry name" value="PyrdxlP-dep_Trfase_major"/>
</dbReference>
<dbReference type="InterPro" id="IPR015422">
    <property type="entry name" value="PyrdxlP-dep_Trfase_small"/>
</dbReference>
<dbReference type="InterPro" id="IPR001085">
    <property type="entry name" value="Ser_HO-MeTrfase"/>
</dbReference>
<dbReference type="InterPro" id="IPR049943">
    <property type="entry name" value="Ser_HO-MeTrfase-like"/>
</dbReference>
<dbReference type="InterPro" id="IPR019798">
    <property type="entry name" value="Ser_HO-MeTrfase_PLP_BS"/>
</dbReference>
<dbReference type="InterPro" id="IPR039429">
    <property type="entry name" value="SHMT-like_dom"/>
</dbReference>
<dbReference type="NCBIfam" id="NF000586">
    <property type="entry name" value="PRK00011.1"/>
    <property type="match status" value="1"/>
</dbReference>
<dbReference type="PANTHER" id="PTHR11680">
    <property type="entry name" value="SERINE HYDROXYMETHYLTRANSFERASE"/>
    <property type="match status" value="1"/>
</dbReference>
<dbReference type="PANTHER" id="PTHR11680:SF35">
    <property type="entry name" value="SERINE HYDROXYMETHYLTRANSFERASE 1"/>
    <property type="match status" value="1"/>
</dbReference>
<dbReference type="Pfam" id="PF00464">
    <property type="entry name" value="SHMT"/>
    <property type="match status" value="1"/>
</dbReference>
<dbReference type="PIRSF" id="PIRSF000412">
    <property type="entry name" value="SHMT"/>
    <property type="match status" value="1"/>
</dbReference>
<dbReference type="SUPFAM" id="SSF53383">
    <property type="entry name" value="PLP-dependent transferases"/>
    <property type="match status" value="1"/>
</dbReference>
<dbReference type="PROSITE" id="PS00096">
    <property type="entry name" value="SHMT"/>
    <property type="match status" value="1"/>
</dbReference>
<sequence length="425" mass="45154">MPVDQSFNAPLSEVDPEIAAVLEQELGRQRGTLEMIASENFVPRAVLQSQGSVLTNKYAEGYPGRRYYGGCEFVDVAEQLAIDRAKSLFGAEFANVQPHSGATANAAVLAAIAQPGDMILGLELAHGGHLTHGMKLNFSGKLYDAAAYGVDPDTFLIDMDVVREKALAHRPQVIIAGWSAYPRHLDFAAFRSIADEVGAKLWVDMAHFAGLVAAGVHPSPVPYADVVSSTVHKTLAGPRSGVILSRDTALAKKLNSAVFPGQQGGPLMHVIAAKATAFKIAATEEFADRQRRTIQGAQILAERLVAADSTEAGVSVLTGGTDVHLVLADLRNSPIDGKQAEDALHEVGITVNRNSVPFDPRPPMVTSGVRIGTSALATRGFGETEFTEVADIIAETLKPDSDLAALRARVLTLTDGFPLYEGLTQ</sequence>
<proteinExistence type="inferred from homology"/>
<feature type="chain" id="PRO_0000369910" description="Serine hydroxymethyltransferase">
    <location>
        <begin position="1"/>
        <end position="425"/>
    </location>
</feature>
<feature type="binding site" evidence="1">
    <location>
        <position position="124"/>
    </location>
    <ligand>
        <name>(6S)-5,6,7,8-tetrahydrofolate</name>
        <dbReference type="ChEBI" id="CHEBI:57453"/>
    </ligand>
</feature>
<feature type="binding site" evidence="1">
    <location>
        <begin position="128"/>
        <end position="130"/>
    </location>
    <ligand>
        <name>(6S)-5,6,7,8-tetrahydrofolate</name>
        <dbReference type="ChEBI" id="CHEBI:57453"/>
    </ligand>
</feature>
<feature type="site" description="Plays an important role in substrate specificity" evidence="1">
    <location>
        <position position="232"/>
    </location>
</feature>
<feature type="modified residue" description="N6-(pyridoxal phosphate)lysine" evidence="1">
    <location>
        <position position="233"/>
    </location>
</feature>